<proteinExistence type="inferred from homology"/>
<feature type="chain" id="PRO_1000146338" description="ATP synthase epsilon chain">
    <location>
        <begin position="1"/>
        <end position="121"/>
    </location>
</feature>
<sequence length="121" mass="13135">MAELNVEIVAVDRNIWSGTAKFLFTRTTVGEIGILPRHIPLVAQLVDDAMVRVEREGEKDLRIAVDGGFLSVTEEGVSILAESAEFESEIDEAAAKQDSESDDPRIAARGRARLRAVGAID</sequence>
<comment type="function">
    <text evidence="1">Produces ATP from ADP in the presence of a proton gradient across the membrane.</text>
</comment>
<comment type="subunit">
    <text evidence="1">F-type ATPases have 2 components, CF(1) - the catalytic core - and CF(0) - the membrane proton channel. CF(1) has five subunits: alpha(3), beta(3), gamma(1), delta(1), epsilon(1). CF(0) has three main subunits: a, b and c.</text>
</comment>
<comment type="subcellular location">
    <subcellularLocation>
        <location evidence="1">Cell membrane</location>
        <topology evidence="1">Peripheral membrane protein</topology>
    </subcellularLocation>
</comment>
<comment type="similarity">
    <text evidence="1">Belongs to the ATPase epsilon chain family.</text>
</comment>
<keyword id="KW-0066">ATP synthesis</keyword>
<keyword id="KW-1003">Cell membrane</keyword>
<keyword id="KW-0139">CF(1)</keyword>
<keyword id="KW-0375">Hydrogen ion transport</keyword>
<keyword id="KW-0406">Ion transport</keyword>
<keyword id="KW-0472">Membrane</keyword>
<keyword id="KW-0813">Transport</keyword>
<name>ATPE_MYCBT</name>
<reference key="1">
    <citation type="journal article" date="2009" name="Vaccine">
        <title>Whole genome sequence analysis of Mycobacterium bovis bacillus Calmette-Guerin (BCG) Tokyo 172: a comparative study of BCG vaccine substrains.</title>
        <authorList>
            <person name="Seki M."/>
            <person name="Honda I."/>
            <person name="Fujita I."/>
            <person name="Yano I."/>
            <person name="Yamamoto S."/>
            <person name="Koyama A."/>
        </authorList>
    </citation>
    <scope>NUCLEOTIDE SEQUENCE [LARGE SCALE GENOMIC DNA]</scope>
    <source>
        <strain>BCG / Tokyo 172 / ATCC 35737 / TMC 1019</strain>
    </source>
</reference>
<protein>
    <recommendedName>
        <fullName evidence="1">ATP synthase epsilon chain</fullName>
    </recommendedName>
    <alternativeName>
        <fullName evidence="1">ATP synthase F1 sector epsilon subunit</fullName>
    </alternativeName>
    <alternativeName>
        <fullName evidence="1">F-ATPase epsilon subunit</fullName>
    </alternativeName>
</protein>
<accession>C1AMV5</accession>
<dbReference type="EMBL" id="AP010918">
    <property type="protein sequence ID" value="BAH25634.1"/>
    <property type="molecule type" value="Genomic_DNA"/>
</dbReference>
<dbReference type="RefSeq" id="WP_003406708.1">
    <property type="nucleotide sequence ID" value="NZ_CP014566.1"/>
</dbReference>
<dbReference type="BMRB" id="C1AMV5"/>
<dbReference type="SMR" id="C1AMV5"/>
<dbReference type="KEGG" id="mbt:JTY_1346"/>
<dbReference type="HOGENOM" id="CLU_084338_4_0_11"/>
<dbReference type="GO" id="GO:0005886">
    <property type="term" value="C:plasma membrane"/>
    <property type="evidence" value="ECO:0007669"/>
    <property type="project" value="UniProtKB-SubCell"/>
</dbReference>
<dbReference type="GO" id="GO:0045259">
    <property type="term" value="C:proton-transporting ATP synthase complex"/>
    <property type="evidence" value="ECO:0007669"/>
    <property type="project" value="UniProtKB-KW"/>
</dbReference>
<dbReference type="GO" id="GO:0005524">
    <property type="term" value="F:ATP binding"/>
    <property type="evidence" value="ECO:0007669"/>
    <property type="project" value="UniProtKB-UniRule"/>
</dbReference>
<dbReference type="GO" id="GO:0046933">
    <property type="term" value="F:proton-transporting ATP synthase activity, rotational mechanism"/>
    <property type="evidence" value="ECO:0007669"/>
    <property type="project" value="UniProtKB-UniRule"/>
</dbReference>
<dbReference type="CDD" id="cd12152">
    <property type="entry name" value="F1-ATPase_delta"/>
    <property type="match status" value="1"/>
</dbReference>
<dbReference type="FunFam" id="2.60.15.10:FF:000011">
    <property type="entry name" value="ATP synthase epsilon chain"/>
    <property type="match status" value="1"/>
</dbReference>
<dbReference type="Gene3D" id="2.60.15.10">
    <property type="entry name" value="F0F1 ATP synthase delta/epsilon subunit, N-terminal"/>
    <property type="match status" value="1"/>
</dbReference>
<dbReference type="HAMAP" id="MF_00530">
    <property type="entry name" value="ATP_synth_epsil_bac"/>
    <property type="match status" value="1"/>
</dbReference>
<dbReference type="InterPro" id="IPR001469">
    <property type="entry name" value="ATP_synth_F1_dsu/esu"/>
</dbReference>
<dbReference type="InterPro" id="IPR020546">
    <property type="entry name" value="ATP_synth_F1_dsu/esu_N"/>
</dbReference>
<dbReference type="InterPro" id="IPR036771">
    <property type="entry name" value="ATPsynth_dsu/esu_N"/>
</dbReference>
<dbReference type="NCBIfam" id="TIGR01216">
    <property type="entry name" value="ATP_synt_epsi"/>
    <property type="match status" value="1"/>
</dbReference>
<dbReference type="NCBIfam" id="NF009977">
    <property type="entry name" value="PRK13442.1"/>
    <property type="match status" value="1"/>
</dbReference>
<dbReference type="PANTHER" id="PTHR13822">
    <property type="entry name" value="ATP SYNTHASE DELTA/EPSILON CHAIN"/>
    <property type="match status" value="1"/>
</dbReference>
<dbReference type="PANTHER" id="PTHR13822:SF10">
    <property type="entry name" value="ATP SYNTHASE EPSILON CHAIN, CHLOROPLASTIC"/>
    <property type="match status" value="1"/>
</dbReference>
<dbReference type="Pfam" id="PF02823">
    <property type="entry name" value="ATP-synt_DE_N"/>
    <property type="match status" value="1"/>
</dbReference>
<dbReference type="SUPFAM" id="SSF51344">
    <property type="entry name" value="Epsilon subunit of F1F0-ATP synthase N-terminal domain"/>
    <property type="match status" value="1"/>
</dbReference>
<organism>
    <name type="scientific">Mycobacterium bovis (strain BCG / Tokyo 172 / ATCC 35737 / TMC 1019)</name>
    <dbReference type="NCBI Taxonomy" id="561275"/>
    <lineage>
        <taxon>Bacteria</taxon>
        <taxon>Bacillati</taxon>
        <taxon>Actinomycetota</taxon>
        <taxon>Actinomycetes</taxon>
        <taxon>Mycobacteriales</taxon>
        <taxon>Mycobacteriaceae</taxon>
        <taxon>Mycobacterium</taxon>
        <taxon>Mycobacterium tuberculosis complex</taxon>
    </lineage>
</organism>
<gene>
    <name evidence="1" type="primary">atpC</name>
    <name type="ordered locus">JTY_1346</name>
</gene>
<evidence type="ECO:0000255" key="1">
    <source>
        <dbReference type="HAMAP-Rule" id="MF_00530"/>
    </source>
</evidence>